<reference key="1">
    <citation type="journal article" date="2004" name="Genome Res.">
        <title>The status, quality, and expansion of the NIH full-length cDNA project: the Mammalian Gene Collection (MGC).</title>
        <authorList>
            <consortium name="The MGC Project Team"/>
        </authorList>
    </citation>
    <scope>NUCLEOTIDE SEQUENCE [LARGE SCALE MRNA]</scope>
    <source>
        <tissue>Mammary gland</tissue>
    </source>
</reference>
<reference key="2">
    <citation type="journal article" date="2003" name="J. Neurosci.">
        <title>The RAS effector RIN1 modulates the formation of aversive memories.</title>
        <authorList>
            <person name="Dhaka A."/>
            <person name="Costa R.M."/>
            <person name="Hu H."/>
            <person name="Irvin D.K."/>
            <person name="Patel A."/>
            <person name="Kornblum H.I."/>
            <person name="Silva A.J."/>
            <person name="O'Dell T.J."/>
            <person name="Colicelli J."/>
        </authorList>
    </citation>
    <scope>FUNCTION</scope>
    <scope>TISSUE SPECIFICITY</scope>
</reference>
<reference key="3">
    <citation type="journal article" date="2007" name="Mol. Cell. Proteomics">
        <title>Qualitative and quantitative analyses of protein phosphorylation in naive and stimulated mouse synaptosomal preparations.</title>
        <authorList>
            <person name="Munton R.P."/>
            <person name="Tweedie-Cullen R."/>
            <person name="Livingstone-Zatchej M."/>
            <person name="Weinandy F."/>
            <person name="Waidelich M."/>
            <person name="Longo D."/>
            <person name="Gehrig P."/>
            <person name="Potthast F."/>
            <person name="Rutishauser D."/>
            <person name="Gerrits B."/>
            <person name="Panse C."/>
            <person name="Schlapbach R."/>
            <person name="Mansuy I.M."/>
        </authorList>
    </citation>
    <scope>IDENTIFICATION BY MASS SPECTROMETRY [LARGE SCALE ANALYSIS]</scope>
    <source>
        <tissue>Brain cortex</tissue>
    </source>
</reference>
<reference key="4">
    <citation type="journal article" date="2008" name="J. Proteome Res.">
        <title>Large-scale identification and evolution indexing of tyrosine phosphorylation sites from murine brain.</title>
        <authorList>
            <person name="Ballif B.A."/>
            <person name="Carey G.R."/>
            <person name="Sunyaev S.R."/>
            <person name="Gygi S.P."/>
        </authorList>
    </citation>
    <scope>PHOSPHORYLATION [LARGE SCALE ANALYSIS] AT TYR-35</scope>
    <scope>IDENTIFICATION BY MASS SPECTROMETRY [LARGE SCALE ANALYSIS]</scope>
    <source>
        <tissue>Brain</tissue>
    </source>
</reference>
<reference key="5">
    <citation type="journal article" date="2009" name="Mol. Cell. Proteomics">
        <title>Large scale localization of protein phosphorylation by use of electron capture dissociation mass spectrometry.</title>
        <authorList>
            <person name="Sweet S.M."/>
            <person name="Bailey C.M."/>
            <person name="Cunningham D.L."/>
            <person name="Heath J.K."/>
            <person name="Cooper H.J."/>
        </authorList>
    </citation>
    <scope>PHOSPHORYLATION [LARGE SCALE ANALYSIS] AT TYR-35</scope>
    <scope>IDENTIFICATION BY MASS SPECTROMETRY [LARGE SCALE ANALYSIS]</scope>
    <source>
        <tissue>Embryonic fibroblast</tissue>
    </source>
</reference>
<reference key="6">
    <citation type="journal article" date="2010" name="Cell">
        <title>A tissue-specific atlas of mouse protein phosphorylation and expression.</title>
        <authorList>
            <person name="Huttlin E.L."/>
            <person name="Jedrychowski M.P."/>
            <person name="Elias J.E."/>
            <person name="Goswami T."/>
            <person name="Rad R."/>
            <person name="Beausoleil S.A."/>
            <person name="Villen J."/>
            <person name="Haas W."/>
            <person name="Sowa M.E."/>
            <person name="Gygi S.P."/>
        </authorList>
    </citation>
    <scope>PHOSPHORYLATION [LARGE SCALE ANALYSIS] AT SER-198</scope>
    <scope>IDENTIFICATION BY MASS SPECTROMETRY [LARGE SCALE ANALYSIS]</scope>
    <source>
        <tissue>Brain</tissue>
        <tissue>Brown adipose tissue</tissue>
        <tissue>Kidney</tissue>
        <tissue>Lung</tissue>
    </source>
</reference>
<name>RIN1_MOUSE</name>
<protein>
    <recommendedName>
        <fullName>Ras and Rab interactor 1</fullName>
    </recommendedName>
    <alternativeName>
        <fullName>Ras interaction/interference protein 1</fullName>
    </alternativeName>
</protein>
<comment type="function">
    <text evidence="1 6">Ras effector protein, which may serve as an inhibitory modulator of neuronal plasticity in aversive memory formation. Can affect Ras signaling at different levels. First, by competing with RAF1 protein for binding to activated Ras. Second, by enhancing signaling from ABL1 and ABL2, which regulate cytoskeletal remodeling. Third, by activating RAB5A, possibly by functioning as a guanine nucleotide exchange factor (GEF) for RAB5A, by exchanging bound GDP for free GTP, and facilitating Ras-activated receptor endocytosis (By similarity).</text>
</comment>
<comment type="subunit">
    <text evidence="1">Interacts with the GTP-bound form of Ras proteins (NRAS, HRAS and KRAS). This interaction prevents the association between RAF1 and Ras. Interacts with 14-3-3 proteins YWHAB, YWHAE and YWHAZ when phosphorylated on Ser-340. Interacts with the SH3 domain of ABL1 and ABL2. Interacts with RAB5A. The interaction with Ras is probably regulated and antagonized by the interaction with 14-3-3 proteins. The interaction with 14-3-3 proteins is regulated by phosphorylation on Ser-340 (By similarity).</text>
</comment>
<comment type="interaction">
    <interactant intactId="EBI-15724937">
        <id>Q921Q7</id>
    </interactant>
    <interactant intactId="EBI-1539152">
        <id>Q03137</id>
        <label>Epha4</label>
    </interactant>
    <organismsDiffer>false</organismsDiffer>
    <experiments>2</experiments>
</comment>
<comment type="subcellular location">
    <subcellularLocation>
        <location evidence="1">Cytoplasm</location>
    </subcellularLocation>
    <subcellularLocation>
        <location evidence="1">Membrane</location>
    </subcellularLocation>
    <subcellularLocation>
        <location evidence="1">Cytoplasm</location>
        <location evidence="1">Cytoskeleton</location>
    </subcellularLocation>
    <text evidence="1">Some amount is membrane-associated.</text>
</comment>
<comment type="tissue specificity">
    <text evidence="6">Highly expressed in brain. Weakly or no expressed in other tissues, except in testis, where it is expressed at intermediate level. In brain, it is mainly expressed in postnatal forebrain neurons in which it is localized in dendrites and colocalizes with Ras.</text>
</comment>
<comment type="PTM">
    <text evidence="1">Phosphorylated on tyrosine residues by ABL1 and ABL2. Phosphorylation at Ser-340 by PRKD1 induces interaction with 14-3-3 proteins (By similarity).</text>
</comment>
<comment type="similarity">
    <text evidence="7">Belongs to the RIN (Ras interaction/interference) family.</text>
</comment>
<organism>
    <name type="scientific">Mus musculus</name>
    <name type="common">Mouse</name>
    <dbReference type="NCBI Taxonomy" id="10090"/>
    <lineage>
        <taxon>Eukaryota</taxon>
        <taxon>Metazoa</taxon>
        <taxon>Chordata</taxon>
        <taxon>Craniata</taxon>
        <taxon>Vertebrata</taxon>
        <taxon>Euteleostomi</taxon>
        <taxon>Mammalia</taxon>
        <taxon>Eutheria</taxon>
        <taxon>Euarchontoglires</taxon>
        <taxon>Glires</taxon>
        <taxon>Rodentia</taxon>
        <taxon>Myomorpha</taxon>
        <taxon>Muroidea</taxon>
        <taxon>Muridae</taxon>
        <taxon>Murinae</taxon>
        <taxon>Mus</taxon>
        <taxon>Mus</taxon>
    </lineage>
</organism>
<accession>Q921Q7</accession>
<sequence length="763" mass="83014">MEDPGETGAHPLGATNLNFVPGHQQKEKPSTDPLYDTPDTRGVQAGGSQQPARTVSLRERLLITRPVWLQLRANAAAALHVLRTEPPGTFLVRKSNTRQCQALCVRLPEASGPSFVSSHYIEESTGGVSLEGSELMFQDLVQLICGYCRTRAIHQAATHKELEAISHLGMEFWSSSLNTKDQQRPSEAPPIPRLKARSPQELDQGTGAALCFFNPLFPGDLGPTKREKFKRSFKVRVSTETSSPLSPPAVPPPPVPVLPGTSSSQTERLPPRQLLQRESSVGYRVPGSAASPCLPPLPSLQEVDCCSPSSSEEEGSSGSPTTSPRLSRPRHRRPLLRSMSSAFCSLLAPERQVGRAATMLMQNRYTAVGQLVQDLLTQVRAGPEPRELQGIRQALSRARAMLSAELGPEKLLPPERLELVLEKSLHRSVLKPLRPILAARLRRRLSADGSLGRLAEGFRLARTQGPGAFGSHLTLSSPVETEQVRQKLLQLLRAYSPSAQVKWLLQACKLLYTALKSQAGENAGADEFLPLLSLVLAQCDLPDLLLEAEYMSELLEPTLLTGEGGYYLTSLSASLALLSGLSQARALPLSPAQELQRSLALWEQRRLPATHSFQHLLRVAYQDPSTGCTSKTLAVPPGSSIATLSQLCATKFRVTQPDAFGLFLYKDQGYHRLPPEALAHRLPATGYLIYRRAERPETQGAVAEKAKTGSKGPEAGAWEEETGGLNREGKPRIAVDQEGKDQARGGHIGPEEQKAEGSQALEE</sequence>
<feature type="chain" id="PRO_0000191318" description="Ras and Rab interactor 1">
    <location>
        <begin position="1"/>
        <end position="763"/>
    </location>
</feature>
<feature type="domain" description="SH2">
    <location>
        <begin position="68"/>
        <end position="151"/>
    </location>
</feature>
<feature type="domain" description="VPS9" evidence="4">
    <location>
        <begin position="445"/>
        <end position="587"/>
    </location>
</feature>
<feature type="domain" description="Ras-associating" evidence="3">
    <location>
        <begin position="613"/>
        <end position="695"/>
    </location>
</feature>
<feature type="region of interest" description="Disordered" evidence="5">
    <location>
        <begin position="1"/>
        <end position="52"/>
    </location>
</feature>
<feature type="region of interest" description="Disordered" evidence="5">
    <location>
        <begin position="177"/>
        <end position="200"/>
    </location>
</feature>
<feature type="region of interest" description="Disordered" evidence="5">
    <location>
        <begin position="238"/>
        <end position="273"/>
    </location>
</feature>
<feature type="region of interest" description="Disordered" evidence="5">
    <location>
        <begin position="301"/>
        <end position="331"/>
    </location>
</feature>
<feature type="region of interest" description="Disordered" evidence="5">
    <location>
        <begin position="698"/>
        <end position="763"/>
    </location>
</feature>
<feature type="compositionally biased region" description="Pro residues" evidence="5">
    <location>
        <begin position="245"/>
        <end position="257"/>
    </location>
</feature>
<feature type="compositionally biased region" description="Low complexity" evidence="5">
    <location>
        <begin position="316"/>
        <end position="326"/>
    </location>
</feature>
<feature type="compositionally biased region" description="Basic and acidic residues" evidence="5">
    <location>
        <begin position="727"/>
        <end position="755"/>
    </location>
</feature>
<feature type="modified residue" description="N-acetylmethionine" evidence="2">
    <location>
        <position position="1"/>
    </location>
</feature>
<feature type="modified residue" description="Phosphotyrosine; by ABL1 and ABL2" evidence="8 9">
    <location>
        <position position="35"/>
    </location>
</feature>
<feature type="modified residue" description="Phosphoserine" evidence="10">
    <location>
        <position position="198"/>
    </location>
</feature>
<feature type="modified residue" description="Phosphoserine" evidence="2">
    <location>
        <position position="246"/>
    </location>
</feature>
<feature type="modified residue" description="Phosphoserine" evidence="2">
    <location>
        <position position="319"/>
    </location>
</feature>
<feature type="modified residue" description="Phosphoserine" evidence="2">
    <location>
        <position position="323"/>
    </location>
</feature>
<feature type="modified residue" description="Phosphoserine; by PKD/PRKD1" evidence="2">
    <location>
        <position position="340"/>
    </location>
</feature>
<feature type="modified residue" description="Phosphoserine" evidence="2">
    <location>
        <position position="598"/>
    </location>
</feature>
<feature type="modified residue" description="Omega-N-methylarginine" evidence="2">
    <location>
        <position position="681"/>
    </location>
</feature>
<dbReference type="EMBL" id="BC011277">
    <property type="protein sequence ID" value="AAH11277.1"/>
    <property type="molecule type" value="mRNA"/>
</dbReference>
<dbReference type="CCDS" id="CCDS29447.1"/>
<dbReference type="RefSeq" id="NP_663470.1">
    <property type="nucleotide sequence ID" value="NM_145495.3"/>
</dbReference>
<dbReference type="SMR" id="Q921Q7"/>
<dbReference type="BioGRID" id="230435">
    <property type="interactions" value="9"/>
</dbReference>
<dbReference type="DIP" id="DIP-46280N"/>
<dbReference type="FunCoup" id="Q921Q7">
    <property type="interactions" value="371"/>
</dbReference>
<dbReference type="IntAct" id="Q921Q7">
    <property type="interactions" value="1"/>
</dbReference>
<dbReference type="STRING" id="10090.ENSMUSP00000153189"/>
<dbReference type="GlyGen" id="Q921Q7">
    <property type="glycosylation" value="1 site, 1 O-linked glycan (1 site)"/>
</dbReference>
<dbReference type="iPTMnet" id="Q921Q7"/>
<dbReference type="PhosphoSitePlus" id="Q921Q7"/>
<dbReference type="SwissPalm" id="Q921Q7"/>
<dbReference type="PaxDb" id="10090-ENSMUSP00000025818"/>
<dbReference type="PeptideAtlas" id="Q921Q7"/>
<dbReference type="ProteomicsDB" id="255274"/>
<dbReference type="Pumba" id="Q921Q7"/>
<dbReference type="Antibodypedia" id="30128">
    <property type="antibodies" value="207 antibodies from 31 providers"/>
</dbReference>
<dbReference type="DNASU" id="225870"/>
<dbReference type="Ensembl" id="ENSMUST00000225427.2">
    <property type="protein sequence ID" value="ENSMUSP00000153189.2"/>
    <property type="gene ID" value="ENSMUSG00000024883.9"/>
</dbReference>
<dbReference type="GeneID" id="225870"/>
<dbReference type="KEGG" id="mmu:225870"/>
<dbReference type="UCSC" id="uc008gca.1">
    <property type="organism name" value="mouse"/>
</dbReference>
<dbReference type="AGR" id="MGI:2385695"/>
<dbReference type="CTD" id="9610"/>
<dbReference type="MGI" id="MGI:2385695">
    <property type="gene designation" value="Rin1"/>
</dbReference>
<dbReference type="VEuPathDB" id="HostDB:ENSMUSG00000024883"/>
<dbReference type="eggNOG" id="KOG2320">
    <property type="taxonomic scope" value="Eukaryota"/>
</dbReference>
<dbReference type="GeneTree" id="ENSGT00940000161834"/>
<dbReference type="HOGENOM" id="CLU_011829_1_0_1"/>
<dbReference type="InParanoid" id="Q921Q7"/>
<dbReference type="PhylomeDB" id="Q921Q7"/>
<dbReference type="TreeFam" id="TF331067"/>
<dbReference type="Reactome" id="R-MMU-8876198">
    <property type="pathway name" value="RAB GEFs exchange GTP for GDP on RABs"/>
</dbReference>
<dbReference type="BioGRID-ORCS" id="225870">
    <property type="hits" value="3 hits in 78 CRISPR screens"/>
</dbReference>
<dbReference type="PRO" id="PR:Q921Q7"/>
<dbReference type="Proteomes" id="UP000000589">
    <property type="component" value="Chromosome 19"/>
</dbReference>
<dbReference type="RNAct" id="Q921Q7">
    <property type="molecule type" value="protein"/>
</dbReference>
<dbReference type="Bgee" id="ENSMUSG00000024883">
    <property type="expression patterns" value="Expressed in nucleus accumbens and 189 other cell types or tissues"/>
</dbReference>
<dbReference type="ExpressionAtlas" id="Q921Q7">
    <property type="expression patterns" value="baseline and differential"/>
</dbReference>
<dbReference type="GO" id="GO:0005737">
    <property type="term" value="C:cytoplasm"/>
    <property type="evidence" value="ECO:0000266"/>
    <property type="project" value="MGI"/>
</dbReference>
<dbReference type="GO" id="GO:0005856">
    <property type="term" value="C:cytoskeleton"/>
    <property type="evidence" value="ECO:0007669"/>
    <property type="project" value="UniProtKB-SubCell"/>
</dbReference>
<dbReference type="GO" id="GO:0030425">
    <property type="term" value="C:dendrite"/>
    <property type="evidence" value="ECO:0000314"/>
    <property type="project" value="MGI"/>
</dbReference>
<dbReference type="GO" id="GO:0043025">
    <property type="term" value="C:neuronal cell body"/>
    <property type="evidence" value="ECO:0000314"/>
    <property type="project" value="MGI"/>
</dbReference>
<dbReference type="GO" id="GO:0005886">
    <property type="term" value="C:plasma membrane"/>
    <property type="evidence" value="ECO:0000266"/>
    <property type="project" value="MGI"/>
</dbReference>
<dbReference type="GO" id="GO:0005096">
    <property type="term" value="F:GTPase activator activity"/>
    <property type="evidence" value="ECO:0007669"/>
    <property type="project" value="UniProtKB-KW"/>
</dbReference>
<dbReference type="GO" id="GO:0005085">
    <property type="term" value="F:guanyl-nucleotide exchange factor activity"/>
    <property type="evidence" value="ECO:0007669"/>
    <property type="project" value="InterPro"/>
</dbReference>
<dbReference type="GO" id="GO:0031267">
    <property type="term" value="F:small GTPase binding"/>
    <property type="evidence" value="ECO:0000314"/>
    <property type="project" value="MGI"/>
</dbReference>
<dbReference type="GO" id="GO:0008306">
    <property type="term" value="P:associative learning"/>
    <property type="evidence" value="ECO:0000315"/>
    <property type="project" value="MGI"/>
</dbReference>
<dbReference type="GO" id="GO:0006897">
    <property type="term" value="P:endocytosis"/>
    <property type="evidence" value="ECO:0007669"/>
    <property type="project" value="UniProtKB-KW"/>
</dbReference>
<dbReference type="GO" id="GO:0007613">
    <property type="term" value="P:memory"/>
    <property type="evidence" value="ECO:0000315"/>
    <property type="project" value="MGI"/>
</dbReference>
<dbReference type="GO" id="GO:0031914">
    <property type="term" value="P:negative regulation of synaptic plasticity"/>
    <property type="evidence" value="ECO:0000315"/>
    <property type="project" value="MGI"/>
</dbReference>
<dbReference type="GO" id="GO:0007165">
    <property type="term" value="P:signal transduction"/>
    <property type="evidence" value="ECO:0007669"/>
    <property type="project" value="InterPro"/>
</dbReference>
<dbReference type="CDD" id="cd10393">
    <property type="entry name" value="SH2_RIN1"/>
    <property type="match status" value="1"/>
</dbReference>
<dbReference type="FunFam" id="1.20.1050.80:FF:000002">
    <property type="entry name" value="Ras and Rab interactor 2"/>
    <property type="match status" value="1"/>
</dbReference>
<dbReference type="Gene3D" id="3.30.505.10">
    <property type="entry name" value="SH2 domain"/>
    <property type="match status" value="1"/>
</dbReference>
<dbReference type="Gene3D" id="1.20.1050.80">
    <property type="entry name" value="VPS9 domain"/>
    <property type="match status" value="1"/>
</dbReference>
<dbReference type="InterPro" id="IPR000159">
    <property type="entry name" value="RA_dom"/>
</dbReference>
<dbReference type="InterPro" id="IPR035867">
    <property type="entry name" value="RIN1_SH2"/>
</dbReference>
<dbReference type="InterPro" id="IPR000980">
    <property type="entry name" value="SH2"/>
</dbReference>
<dbReference type="InterPro" id="IPR036860">
    <property type="entry name" value="SH2_dom_sf"/>
</dbReference>
<dbReference type="InterPro" id="IPR003123">
    <property type="entry name" value="VPS9"/>
</dbReference>
<dbReference type="InterPro" id="IPR045046">
    <property type="entry name" value="Vps9-like"/>
</dbReference>
<dbReference type="InterPro" id="IPR037191">
    <property type="entry name" value="VPS9_dom_sf"/>
</dbReference>
<dbReference type="PANTHER" id="PTHR23101">
    <property type="entry name" value="RAB GDP/GTP EXCHANGE FACTOR"/>
    <property type="match status" value="1"/>
</dbReference>
<dbReference type="PANTHER" id="PTHR23101:SF62">
    <property type="entry name" value="RAS AND RAB INTERACTOR 1"/>
    <property type="match status" value="1"/>
</dbReference>
<dbReference type="Pfam" id="PF23268">
    <property type="entry name" value="RIN1"/>
    <property type="match status" value="1"/>
</dbReference>
<dbReference type="Pfam" id="PF02204">
    <property type="entry name" value="VPS9"/>
    <property type="match status" value="1"/>
</dbReference>
<dbReference type="SMART" id="SM00314">
    <property type="entry name" value="RA"/>
    <property type="match status" value="1"/>
</dbReference>
<dbReference type="SMART" id="SM00252">
    <property type="entry name" value="SH2"/>
    <property type="match status" value="1"/>
</dbReference>
<dbReference type="SMART" id="SM00167">
    <property type="entry name" value="VPS9"/>
    <property type="match status" value="1"/>
</dbReference>
<dbReference type="SUPFAM" id="SSF55550">
    <property type="entry name" value="SH2 domain"/>
    <property type="match status" value="1"/>
</dbReference>
<dbReference type="SUPFAM" id="SSF109993">
    <property type="entry name" value="VPS9 domain"/>
    <property type="match status" value="1"/>
</dbReference>
<dbReference type="PROSITE" id="PS50200">
    <property type="entry name" value="RA"/>
    <property type="match status" value="1"/>
</dbReference>
<dbReference type="PROSITE" id="PS51205">
    <property type="entry name" value="VPS9"/>
    <property type="match status" value="1"/>
</dbReference>
<proteinExistence type="evidence at protein level"/>
<evidence type="ECO:0000250" key="1"/>
<evidence type="ECO:0000250" key="2">
    <source>
        <dbReference type="UniProtKB" id="Q13671"/>
    </source>
</evidence>
<evidence type="ECO:0000255" key="3">
    <source>
        <dbReference type="PROSITE-ProRule" id="PRU00166"/>
    </source>
</evidence>
<evidence type="ECO:0000255" key="4">
    <source>
        <dbReference type="PROSITE-ProRule" id="PRU00550"/>
    </source>
</evidence>
<evidence type="ECO:0000256" key="5">
    <source>
        <dbReference type="SAM" id="MobiDB-lite"/>
    </source>
</evidence>
<evidence type="ECO:0000269" key="6">
    <source>
    </source>
</evidence>
<evidence type="ECO:0000305" key="7"/>
<evidence type="ECO:0007744" key="8">
    <source>
    </source>
</evidence>
<evidence type="ECO:0007744" key="9">
    <source>
    </source>
</evidence>
<evidence type="ECO:0007744" key="10">
    <source>
    </source>
</evidence>
<keyword id="KW-0007">Acetylation</keyword>
<keyword id="KW-0963">Cytoplasm</keyword>
<keyword id="KW-0206">Cytoskeleton</keyword>
<keyword id="KW-0254">Endocytosis</keyword>
<keyword id="KW-0343">GTPase activation</keyword>
<keyword id="KW-0472">Membrane</keyword>
<keyword id="KW-0488">Methylation</keyword>
<keyword id="KW-0597">Phosphoprotein</keyword>
<keyword id="KW-1185">Reference proteome</keyword>
<keyword id="KW-0727">SH2 domain</keyword>
<gene>
    <name type="primary">Rin1</name>
</gene>